<feature type="chain" id="PRO_0000145279" description="DNA gyrase subunit B">
    <location>
        <begin position="1" status="less than"/>
        <end position="390" status="greater than"/>
    </location>
</feature>
<feature type="domain" description="Toprim" evidence="2">
    <location>
        <begin position="313"/>
        <end position="390" status="greater than"/>
    </location>
</feature>
<feature type="site" description="Interaction with DNA" evidence="2">
    <location>
        <position position="344"/>
    </location>
</feature>
<feature type="site" description="Interaction with DNA" evidence="2">
    <location>
        <position position="347"/>
    </location>
</feature>
<feature type="non-terminal residue">
    <location>
        <position position="1"/>
    </location>
</feature>
<feature type="non-terminal residue">
    <location>
        <position position="390"/>
    </location>
</feature>
<organism>
    <name type="scientific">Acinetobacter lwoffii</name>
    <dbReference type="NCBI Taxonomy" id="28090"/>
    <lineage>
        <taxon>Bacteria</taxon>
        <taxon>Pseudomonadati</taxon>
        <taxon>Pseudomonadota</taxon>
        <taxon>Gammaproteobacteria</taxon>
        <taxon>Moraxellales</taxon>
        <taxon>Moraxellaceae</taxon>
        <taxon>Acinetobacter</taxon>
    </lineage>
</organism>
<accession>Q44088</accession>
<accession>Q59125</accession>
<accession>Q9ZA00</accession>
<sequence>DNSYKVSGGLHGVGVSVVNALSEKLELTIHRAGKIHEQEYRHGDSQYPLKVVGDTNRTGTRVRFWPSAETFSQTIFNVDILARRLRELSFLNAGVRIVLRDERINAEHVFDYEGGLSEFVKYINEGKTHLNDIFHFTAAQADNGITVEVALQWNDSYQENVRCFTNNIPQKDGGTHLAGFRAALTRGLNNYMDSENILKKEKVAVSGDDAREGLTAIVSVKVPDPKFSSQTKEKLVSSEVKTAVEQAMNKAFSEYLLENPQAAKAIAGKIIDAARARDAARKAREMTRRKSALDIAGLPGKLADCQEKDPALSELYLVEGDSAGGSAKQGRNRKMQAILPLKGKILNVERARFDRMISSAEVGTLITALGCGIGREEYNPDKLRYHKIII</sequence>
<protein>
    <recommendedName>
        <fullName>DNA gyrase subunit B</fullName>
        <ecNumber evidence="2">5.6.2.2</ecNumber>
    </recommendedName>
</protein>
<reference key="1">
    <citation type="journal article" date="1999" name="Int. J. Syst. Bacteriol.">
        <title>Phylogenetic structures of the genus Acinetobacter based on gyrB sequences: comparison with the grouping by DNA-DNA hybridization.</title>
        <authorList>
            <person name="Yamamoto S."/>
            <person name="Bouvet P.J.M."/>
            <person name="Harayama S."/>
        </authorList>
    </citation>
    <scope>NUCLEOTIDE SEQUENCE [GENOMIC DNA]</scope>
    <source>
        <strain>ATCC 15309 / DSM 2403 / CCUG 33984 / JCM 6840 / NBRC 109760 / NCIMB 12456 / NCTC 5866 / CIP 644.10</strain>
    </source>
</reference>
<reference key="2">
    <citation type="journal article" date="1996" name="Int. J. Syst. Bacteriol.">
        <title>Phylogenetic analysis of Acinetobacter strains based on the nucleotide sequences of gyrB genes and on the amino acid sequences of their products.</title>
        <authorList>
            <person name="Yamamoto S."/>
            <person name="Harayama S."/>
        </authorList>
    </citation>
    <scope>NUCLEOTIDE SEQUENCE [GENOMIC DNA] OF 3-118 AND 290-389</scope>
    <source>
        <strain>ATCC 15309 / DSM 2403 / CCUG 33984 / JCM 6840 / NBRC 109760 / NCIMB 12456 / NCTC 5866 / CIP 644.10</strain>
    </source>
</reference>
<proteinExistence type="inferred from homology"/>
<name>GYRB1_ACILW</name>
<keyword id="KW-0067">ATP-binding</keyword>
<keyword id="KW-0963">Cytoplasm</keyword>
<keyword id="KW-0238">DNA-binding</keyword>
<keyword id="KW-0413">Isomerase</keyword>
<keyword id="KW-0547">Nucleotide-binding</keyword>
<keyword id="KW-0799">Topoisomerase</keyword>
<dbReference type="EC" id="5.6.2.2" evidence="2"/>
<dbReference type="EMBL" id="AB008694">
    <property type="protein sequence ID" value="BAA75411.1"/>
    <property type="molecule type" value="Genomic_DNA"/>
</dbReference>
<dbReference type="EMBL" id="D73434">
    <property type="protein sequence ID" value="BAA11159.1"/>
    <property type="molecule type" value="Genomic_DNA"/>
</dbReference>
<dbReference type="EMBL" id="D73419">
    <property type="protein sequence ID" value="BAA11144.1"/>
    <property type="molecule type" value="Genomic_DNA"/>
</dbReference>
<dbReference type="SMR" id="Q44088"/>
<dbReference type="STRING" id="28090.GCA_002119785_01163"/>
<dbReference type="GO" id="GO:0005737">
    <property type="term" value="C:cytoplasm"/>
    <property type="evidence" value="ECO:0007669"/>
    <property type="project" value="UniProtKB-SubCell"/>
</dbReference>
<dbReference type="GO" id="GO:0005524">
    <property type="term" value="F:ATP binding"/>
    <property type="evidence" value="ECO:0007669"/>
    <property type="project" value="UniProtKB-KW"/>
</dbReference>
<dbReference type="GO" id="GO:0003677">
    <property type="term" value="F:DNA binding"/>
    <property type="evidence" value="ECO:0007669"/>
    <property type="project" value="UniProtKB-KW"/>
</dbReference>
<dbReference type="GO" id="GO:0003918">
    <property type="term" value="F:DNA topoisomerase type II (double strand cut, ATP-hydrolyzing) activity"/>
    <property type="evidence" value="ECO:0007669"/>
    <property type="project" value="UniProtKB-EC"/>
</dbReference>
<dbReference type="GO" id="GO:0006265">
    <property type="term" value="P:DNA topological change"/>
    <property type="evidence" value="ECO:0007669"/>
    <property type="project" value="InterPro"/>
</dbReference>
<dbReference type="CDD" id="cd00822">
    <property type="entry name" value="TopoII_Trans_DNA_gyrase"/>
    <property type="match status" value="1"/>
</dbReference>
<dbReference type="FunFam" id="3.30.230.10:FF:000005">
    <property type="entry name" value="DNA gyrase subunit B"/>
    <property type="match status" value="1"/>
</dbReference>
<dbReference type="Gene3D" id="3.30.230.10">
    <property type="match status" value="1"/>
</dbReference>
<dbReference type="Gene3D" id="3.40.50.670">
    <property type="match status" value="1"/>
</dbReference>
<dbReference type="Gene3D" id="3.30.565.10">
    <property type="entry name" value="Histidine kinase-like ATPase, C-terminal domain"/>
    <property type="match status" value="1"/>
</dbReference>
<dbReference type="InterPro" id="IPR036890">
    <property type="entry name" value="HATPase_C_sf"/>
</dbReference>
<dbReference type="InterPro" id="IPR020568">
    <property type="entry name" value="Ribosomal_Su5_D2-typ_SF"/>
</dbReference>
<dbReference type="InterPro" id="IPR014721">
    <property type="entry name" value="Ribsml_uS5_D2-typ_fold_subgr"/>
</dbReference>
<dbReference type="InterPro" id="IPR001241">
    <property type="entry name" value="Topo_IIA"/>
</dbReference>
<dbReference type="InterPro" id="IPR013760">
    <property type="entry name" value="Topo_IIA-like_dom_sf"/>
</dbReference>
<dbReference type="InterPro" id="IPR000565">
    <property type="entry name" value="Topo_IIA_B"/>
</dbReference>
<dbReference type="InterPro" id="IPR013759">
    <property type="entry name" value="Topo_IIA_B_C"/>
</dbReference>
<dbReference type="InterPro" id="IPR013506">
    <property type="entry name" value="Topo_IIA_bsu_dom2"/>
</dbReference>
<dbReference type="InterPro" id="IPR018522">
    <property type="entry name" value="TopoIIA_CS"/>
</dbReference>
<dbReference type="InterPro" id="IPR006171">
    <property type="entry name" value="TOPRIM_dom"/>
</dbReference>
<dbReference type="PANTHER" id="PTHR45866:SF1">
    <property type="entry name" value="DNA GYRASE SUBUNIT B, MITOCHONDRIAL"/>
    <property type="match status" value="1"/>
</dbReference>
<dbReference type="PANTHER" id="PTHR45866">
    <property type="entry name" value="DNA GYRASE/TOPOISOMERASE SUBUNIT B"/>
    <property type="match status" value="1"/>
</dbReference>
<dbReference type="Pfam" id="PF00204">
    <property type="entry name" value="DNA_gyraseB"/>
    <property type="match status" value="1"/>
</dbReference>
<dbReference type="Pfam" id="PF01751">
    <property type="entry name" value="Toprim"/>
    <property type="match status" value="1"/>
</dbReference>
<dbReference type="PRINTS" id="PR01159">
    <property type="entry name" value="DNAGYRASEB"/>
</dbReference>
<dbReference type="PRINTS" id="PR00418">
    <property type="entry name" value="TPI2FAMILY"/>
</dbReference>
<dbReference type="SMART" id="SM00433">
    <property type="entry name" value="TOP2c"/>
    <property type="match status" value="1"/>
</dbReference>
<dbReference type="SUPFAM" id="SSF55874">
    <property type="entry name" value="ATPase domain of HSP90 chaperone/DNA topoisomerase II/histidine kinase"/>
    <property type="match status" value="1"/>
</dbReference>
<dbReference type="SUPFAM" id="SSF54211">
    <property type="entry name" value="Ribosomal protein S5 domain 2-like"/>
    <property type="match status" value="1"/>
</dbReference>
<dbReference type="SUPFAM" id="SSF56719">
    <property type="entry name" value="Type II DNA topoisomerase"/>
    <property type="match status" value="1"/>
</dbReference>
<dbReference type="PROSITE" id="PS00177">
    <property type="entry name" value="TOPOISOMERASE_II"/>
    <property type="match status" value="1"/>
</dbReference>
<dbReference type="PROSITE" id="PS50880">
    <property type="entry name" value="TOPRIM"/>
    <property type="match status" value="1"/>
</dbReference>
<gene>
    <name type="primary">gyrB</name>
</gene>
<evidence type="ECO:0000250" key="1">
    <source>
        <dbReference type="UniProtKB" id="P0AES6"/>
    </source>
</evidence>
<evidence type="ECO:0000255" key="2">
    <source>
        <dbReference type="PROSITE-ProRule" id="PRU00995"/>
    </source>
</evidence>
<evidence type="ECO:0000305" key="3"/>
<comment type="function">
    <text evidence="1">A type II topoisomerase that negatively supercoils closed circular double-stranded (ds) DNA in an ATP-dependent manner to modulate DNA topology and maintain chromosomes in an underwound state. Negative supercoiling favors strand separation, and DNA replication, transcription, recombination and repair, all of which involve strand separation. Also able to catalyze the interconversion of other topological isomers of dsDNA rings, including catenanes and knotted rings. Type II topoisomerases break and join 2 DNA strands simultaneously in an ATP-dependent manner.</text>
</comment>
<comment type="catalytic activity">
    <reaction evidence="2">
        <text>ATP-dependent breakage, passage and rejoining of double-stranded DNA.</text>
        <dbReference type="EC" id="5.6.2.2"/>
    </reaction>
</comment>
<comment type="subunit">
    <text evidence="1">Heterotetramer, composed of two GyrA and two GyrB chains. In the heterotetramer, GyrA contains the active site tyrosine that forms a transient covalent intermediate with DNA, while GyrB binds cofactors and catalyzes ATP hydrolysis.</text>
</comment>
<comment type="subcellular location">
    <subcellularLocation>
        <location evidence="1">Cytoplasm</location>
    </subcellularLocation>
</comment>
<comment type="miscellaneous">
    <text evidence="1">Few gyrases are as efficient as E.coli at forming negative supercoils. Not all organisms have 2 type II topoisomerases; in organisms with a single type II topoisomerase this enzyme also has to decatenate newly replicated chromosomes.</text>
</comment>
<comment type="similarity">
    <text evidence="3">Belongs to the type II topoisomerase GyrB family.</text>
</comment>